<evidence type="ECO:0000255" key="1">
    <source>
        <dbReference type="HAMAP-Rule" id="MF_00394"/>
    </source>
</evidence>
<name>GPDA_STAAS</name>
<sequence>MTKITVFGMGSFGTALANVLAENGHDVLMWGKNQDAVDELNTCHTNKKYLKYAKLDVNIIATSDMTKAIQFADIYLMALPTKAMREVASQINDKLTSKKTFIHVAKGIENGTFKRVSEMIEDSISPEYNAGIGVLSGPSHAEEVVVKQPTTVAASSKDKSVSKLTQDLFMNDYLRVYTNDDLIGVELGGALKNIIAVASGIVAGIGYGDNAKAALMTRGLAEISRLGEKLGADPMTFLGLGGIGDLIVTCTSTHSRNFTLGYKLGQGESMDQALSEMNMVVEGIYTTKSVYHLAKEKNVDMPITNALYRVLFENISVKECVKDLMERDKKSE</sequence>
<comment type="function">
    <text evidence="1">Catalyzes the reduction of the glycolytic intermediate dihydroxyacetone phosphate (DHAP) to sn-glycerol 3-phosphate (G3P), the key precursor for phospholipid synthesis.</text>
</comment>
<comment type="catalytic activity">
    <reaction evidence="1">
        <text>sn-glycerol 3-phosphate + NAD(+) = dihydroxyacetone phosphate + NADH + H(+)</text>
        <dbReference type="Rhea" id="RHEA:11092"/>
        <dbReference type="ChEBI" id="CHEBI:15378"/>
        <dbReference type="ChEBI" id="CHEBI:57540"/>
        <dbReference type="ChEBI" id="CHEBI:57597"/>
        <dbReference type="ChEBI" id="CHEBI:57642"/>
        <dbReference type="ChEBI" id="CHEBI:57945"/>
        <dbReference type="EC" id="1.1.1.94"/>
    </reaction>
    <physiologicalReaction direction="right-to-left" evidence="1">
        <dbReference type="Rhea" id="RHEA:11094"/>
    </physiologicalReaction>
</comment>
<comment type="catalytic activity">
    <reaction evidence="1">
        <text>sn-glycerol 3-phosphate + NADP(+) = dihydroxyacetone phosphate + NADPH + H(+)</text>
        <dbReference type="Rhea" id="RHEA:11096"/>
        <dbReference type="ChEBI" id="CHEBI:15378"/>
        <dbReference type="ChEBI" id="CHEBI:57597"/>
        <dbReference type="ChEBI" id="CHEBI:57642"/>
        <dbReference type="ChEBI" id="CHEBI:57783"/>
        <dbReference type="ChEBI" id="CHEBI:58349"/>
        <dbReference type="EC" id="1.1.1.94"/>
    </reaction>
    <physiologicalReaction direction="right-to-left" evidence="1">
        <dbReference type="Rhea" id="RHEA:11098"/>
    </physiologicalReaction>
</comment>
<comment type="pathway">
    <text evidence="1">Membrane lipid metabolism; glycerophospholipid metabolism.</text>
</comment>
<comment type="subcellular location">
    <subcellularLocation>
        <location evidence="1">Cytoplasm</location>
    </subcellularLocation>
</comment>
<comment type="similarity">
    <text evidence="1">Belongs to the NAD-dependent glycerol-3-phosphate dehydrogenase family.</text>
</comment>
<dbReference type="EC" id="1.1.1.94" evidence="1"/>
<dbReference type="EMBL" id="BX571857">
    <property type="protein sequence ID" value="CAG43192.1"/>
    <property type="molecule type" value="Genomic_DNA"/>
</dbReference>
<dbReference type="RefSeq" id="WP_000161738.1">
    <property type="nucleotide sequence ID" value="NC_002953.3"/>
</dbReference>
<dbReference type="SMR" id="Q6G989"/>
<dbReference type="KEGG" id="sas:SAS1415"/>
<dbReference type="HOGENOM" id="CLU_033449_0_2_9"/>
<dbReference type="UniPathway" id="UPA00940"/>
<dbReference type="GO" id="GO:0005829">
    <property type="term" value="C:cytosol"/>
    <property type="evidence" value="ECO:0007669"/>
    <property type="project" value="TreeGrafter"/>
</dbReference>
<dbReference type="GO" id="GO:0047952">
    <property type="term" value="F:glycerol-3-phosphate dehydrogenase [NAD(P)+] activity"/>
    <property type="evidence" value="ECO:0007669"/>
    <property type="project" value="UniProtKB-UniRule"/>
</dbReference>
<dbReference type="GO" id="GO:0051287">
    <property type="term" value="F:NAD binding"/>
    <property type="evidence" value="ECO:0007669"/>
    <property type="project" value="InterPro"/>
</dbReference>
<dbReference type="GO" id="GO:0005975">
    <property type="term" value="P:carbohydrate metabolic process"/>
    <property type="evidence" value="ECO:0007669"/>
    <property type="project" value="InterPro"/>
</dbReference>
<dbReference type="GO" id="GO:0046167">
    <property type="term" value="P:glycerol-3-phosphate biosynthetic process"/>
    <property type="evidence" value="ECO:0007669"/>
    <property type="project" value="UniProtKB-UniRule"/>
</dbReference>
<dbReference type="GO" id="GO:0046168">
    <property type="term" value="P:glycerol-3-phosphate catabolic process"/>
    <property type="evidence" value="ECO:0007669"/>
    <property type="project" value="InterPro"/>
</dbReference>
<dbReference type="GO" id="GO:0006650">
    <property type="term" value="P:glycerophospholipid metabolic process"/>
    <property type="evidence" value="ECO:0007669"/>
    <property type="project" value="UniProtKB-UniRule"/>
</dbReference>
<dbReference type="GO" id="GO:0008654">
    <property type="term" value="P:phospholipid biosynthetic process"/>
    <property type="evidence" value="ECO:0007669"/>
    <property type="project" value="UniProtKB-KW"/>
</dbReference>
<dbReference type="FunFam" id="1.10.1040.10:FF:000001">
    <property type="entry name" value="Glycerol-3-phosphate dehydrogenase [NAD(P)+]"/>
    <property type="match status" value="1"/>
</dbReference>
<dbReference type="FunFam" id="3.40.50.720:FF:000019">
    <property type="entry name" value="Glycerol-3-phosphate dehydrogenase [NAD(P)+]"/>
    <property type="match status" value="1"/>
</dbReference>
<dbReference type="Gene3D" id="1.10.1040.10">
    <property type="entry name" value="N-(1-d-carboxylethyl)-l-norvaline Dehydrogenase, domain 2"/>
    <property type="match status" value="1"/>
</dbReference>
<dbReference type="Gene3D" id="3.40.50.720">
    <property type="entry name" value="NAD(P)-binding Rossmann-like Domain"/>
    <property type="match status" value="1"/>
</dbReference>
<dbReference type="HAMAP" id="MF_00394">
    <property type="entry name" value="NAD_Glyc3P_dehydrog"/>
    <property type="match status" value="1"/>
</dbReference>
<dbReference type="InterPro" id="IPR008927">
    <property type="entry name" value="6-PGluconate_DH-like_C_sf"/>
</dbReference>
<dbReference type="InterPro" id="IPR013328">
    <property type="entry name" value="6PGD_dom2"/>
</dbReference>
<dbReference type="InterPro" id="IPR006168">
    <property type="entry name" value="G3P_DH_NAD-dep"/>
</dbReference>
<dbReference type="InterPro" id="IPR006109">
    <property type="entry name" value="G3P_DH_NAD-dep_C"/>
</dbReference>
<dbReference type="InterPro" id="IPR011128">
    <property type="entry name" value="G3P_DH_NAD-dep_N"/>
</dbReference>
<dbReference type="InterPro" id="IPR036291">
    <property type="entry name" value="NAD(P)-bd_dom_sf"/>
</dbReference>
<dbReference type="NCBIfam" id="NF000940">
    <property type="entry name" value="PRK00094.1-2"/>
    <property type="match status" value="1"/>
</dbReference>
<dbReference type="NCBIfam" id="NF000941">
    <property type="entry name" value="PRK00094.1-3"/>
    <property type="match status" value="1"/>
</dbReference>
<dbReference type="NCBIfam" id="NF000942">
    <property type="entry name" value="PRK00094.1-4"/>
    <property type="match status" value="1"/>
</dbReference>
<dbReference type="PANTHER" id="PTHR11728">
    <property type="entry name" value="GLYCEROL-3-PHOSPHATE DEHYDROGENASE"/>
    <property type="match status" value="1"/>
</dbReference>
<dbReference type="PANTHER" id="PTHR11728:SF1">
    <property type="entry name" value="GLYCEROL-3-PHOSPHATE DEHYDROGENASE [NAD(+)] 2, CHLOROPLASTIC"/>
    <property type="match status" value="1"/>
</dbReference>
<dbReference type="Pfam" id="PF07479">
    <property type="entry name" value="NAD_Gly3P_dh_C"/>
    <property type="match status" value="1"/>
</dbReference>
<dbReference type="Pfam" id="PF01210">
    <property type="entry name" value="NAD_Gly3P_dh_N"/>
    <property type="match status" value="1"/>
</dbReference>
<dbReference type="PIRSF" id="PIRSF000114">
    <property type="entry name" value="Glycerol-3-P_dh"/>
    <property type="match status" value="1"/>
</dbReference>
<dbReference type="PRINTS" id="PR00077">
    <property type="entry name" value="GPDHDRGNASE"/>
</dbReference>
<dbReference type="SUPFAM" id="SSF48179">
    <property type="entry name" value="6-phosphogluconate dehydrogenase C-terminal domain-like"/>
    <property type="match status" value="1"/>
</dbReference>
<dbReference type="SUPFAM" id="SSF51735">
    <property type="entry name" value="NAD(P)-binding Rossmann-fold domains"/>
    <property type="match status" value="1"/>
</dbReference>
<dbReference type="PROSITE" id="PS00957">
    <property type="entry name" value="NAD_G3PDH"/>
    <property type="match status" value="1"/>
</dbReference>
<proteinExistence type="inferred from homology"/>
<accession>Q6G989</accession>
<protein>
    <recommendedName>
        <fullName evidence="1">Glycerol-3-phosphate dehydrogenase [NAD(P)+]</fullName>
        <ecNumber evidence="1">1.1.1.94</ecNumber>
    </recommendedName>
    <alternativeName>
        <fullName evidence="1">NAD(P)(+)-dependent glycerol-3-phosphate dehydrogenase</fullName>
    </alternativeName>
    <alternativeName>
        <fullName evidence="1">NAD(P)H-dependent dihydroxyacetone-phosphate reductase</fullName>
    </alternativeName>
</protein>
<keyword id="KW-0963">Cytoplasm</keyword>
<keyword id="KW-0444">Lipid biosynthesis</keyword>
<keyword id="KW-0443">Lipid metabolism</keyword>
<keyword id="KW-0520">NAD</keyword>
<keyword id="KW-0521">NADP</keyword>
<keyword id="KW-0547">Nucleotide-binding</keyword>
<keyword id="KW-0560">Oxidoreductase</keyword>
<keyword id="KW-0594">Phospholipid biosynthesis</keyword>
<keyword id="KW-1208">Phospholipid metabolism</keyword>
<gene>
    <name evidence="1" type="primary">gpsA</name>
    <name type="ordered locus">SAS1415</name>
</gene>
<organism>
    <name type="scientific">Staphylococcus aureus (strain MSSA476)</name>
    <dbReference type="NCBI Taxonomy" id="282459"/>
    <lineage>
        <taxon>Bacteria</taxon>
        <taxon>Bacillati</taxon>
        <taxon>Bacillota</taxon>
        <taxon>Bacilli</taxon>
        <taxon>Bacillales</taxon>
        <taxon>Staphylococcaceae</taxon>
        <taxon>Staphylococcus</taxon>
    </lineage>
</organism>
<reference key="1">
    <citation type="journal article" date="2004" name="Proc. Natl. Acad. Sci. U.S.A.">
        <title>Complete genomes of two clinical Staphylococcus aureus strains: evidence for the rapid evolution of virulence and drug resistance.</title>
        <authorList>
            <person name="Holden M.T.G."/>
            <person name="Feil E.J."/>
            <person name="Lindsay J.A."/>
            <person name="Peacock S.J."/>
            <person name="Day N.P.J."/>
            <person name="Enright M.C."/>
            <person name="Foster T.J."/>
            <person name="Moore C.E."/>
            <person name="Hurst L."/>
            <person name="Atkin R."/>
            <person name="Barron A."/>
            <person name="Bason N."/>
            <person name="Bentley S.D."/>
            <person name="Chillingworth C."/>
            <person name="Chillingworth T."/>
            <person name="Churcher C."/>
            <person name="Clark L."/>
            <person name="Corton C."/>
            <person name="Cronin A."/>
            <person name="Doggett J."/>
            <person name="Dowd L."/>
            <person name="Feltwell T."/>
            <person name="Hance Z."/>
            <person name="Harris B."/>
            <person name="Hauser H."/>
            <person name="Holroyd S."/>
            <person name="Jagels K."/>
            <person name="James K.D."/>
            <person name="Lennard N."/>
            <person name="Line A."/>
            <person name="Mayes R."/>
            <person name="Moule S."/>
            <person name="Mungall K."/>
            <person name="Ormond D."/>
            <person name="Quail M.A."/>
            <person name="Rabbinowitsch E."/>
            <person name="Rutherford K.M."/>
            <person name="Sanders M."/>
            <person name="Sharp S."/>
            <person name="Simmonds M."/>
            <person name="Stevens K."/>
            <person name="Whitehead S."/>
            <person name="Barrell B.G."/>
            <person name="Spratt B.G."/>
            <person name="Parkhill J."/>
        </authorList>
    </citation>
    <scope>NUCLEOTIDE SEQUENCE [LARGE SCALE GENOMIC DNA]</scope>
    <source>
        <strain>MSSA476</strain>
    </source>
</reference>
<feature type="chain" id="PRO_0000138027" description="Glycerol-3-phosphate dehydrogenase [NAD(P)+]">
    <location>
        <begin position="1"/>
        <end position="332"/>
    </location>
</feature>
<feature type="active site" description="Proton acceptor" evidence="1">
    <location>
        <position position="192"/>
    </location>
</feature>
<feature type="binding site" evidence="1">
    <location>
        <position position="11"/>
    </location>
    <ligand>
        <name>NADPH</name>
        <dbReference type="ChEBI" id="CHEBI:57783"/>
    </ligand>
</feature>
<feature type="binding site" evidence="1">
    <location>
        <position position="12"/>
    </location>
    <ligand>
        <name>NADPH</name>
        <dbReference type="ChEBI" id="CHEBI:57783"/>
    </ligand>
</feature>
<feature type="binding site" evidence="1">
    <location>
        <position position="32"/>
    </location>
    <ligand>
        <name>NADPH</name>
        <dbReference type="ChEBI" id="CHEBI:57783"/>
    </ligand>
</feature>
<feature type="binding site" evidence="1">
    <location>
        <position position="106"/>
    </location>
    <ligand>
        <name>NADPH</name>
        <dbReference type="ChEBI" id="CHEBI:57783"/>
    </ligand>
</feature>
<feature type="binding site" evidence="1">
    <location>
        <position position="106"/>
    </location>
    <ligand>
        <name>sn-glycerol 3-phosphate</name>
        <dbReference type="ChEBI" id="CHEBI:57597"/>
    </ligand>
</feature>
<feature type="binding site" evidence="1">
    <location>
        <position position="137"/>
    </location>
    <ligand>
        <name>sn-glycerol 3-phosphate</name>
        <dbReference type="ChEBI" id="CHEBI:57597"/>
    </ligand>
</feature>
<feature type="binding site" evidence="1">
    <location>
        <position position="139"/>
    </location>
    <ligand>
        <name>sn-glycerol 3-phosphate</name>
        <dbReference type="ChEBI" id="CHEBI:57597"/>
    </ligand>
</feature>
<feature type="binding site" evidence="1">
    <location>
        <position position="141"/>
    </location>
    <ligand>
        <name>NADPH</name>
        <dbReference type="ChEBI" id="CHEBI:57783"/>
    </ligand>
</feature>
<feature type="binding site" evidence="1">
    <location>
        <position position="192"/>
    </location>
    <ligand>
        <name>sn-glycerol 3-phosphate</name>
        <dbReference type="ChEBI" id="CHEBI:57597"/>
    </ligand>
</feature>
<feature type="binding site" evidence="1">
    <location>
        <position position="245"/>
    </location>
    <ligand>
        <name>sn-glycerol 3-phosphate</name>
        <dbReference type="ChEBI" id="CHEBI:57597"/>
    </ligand>
</feature>
<feature type="binding site" evidence="1">
    <location>
        <position position="255"/>
    </location>
    <ligand>
        <name>sn-glycerol 3-phosphate</name>
        <dbReference type="ChEBI" id="CHEBI:57597"/>
    </ligand>
</feature>
<feature type="binding site" evidence="1">
    <location>
        <position position="256"/>
    </location>
    <ligand>
        <name>NADPH</name>
        <dbReference type="ChEBI" id="CHEBI:57783"/>
    </ligand>
</feature>
<feature type="binding site" evidence="1">
    <location>
        <position position="256"/>
    </location>
    <ligand>
        <name>sn-glycerol 3-phosphate</name>
        <dbReference type="ChEBI" id="CHEBI:57597"/>
    </ligand>
</feature>
<feature type="binding site" evidence="1">
    <location>
        <position position="257"/>
    </location>
    <ligand>
        <name>sn-glycerol 3-phosphate</name>
        <dbReference type="ChEBI" id="CHEBI:57597"/>
    </ligand>
</feature>
<feature type="binding site" evidence="1">
    <location>
        <position position="280"/>
    </location>
    <ligand>
        <name>NADPH</name>
        <dbReference type="ChEBI" id="CHEBI:57783"/>
    </ligand>
</feature>
<feature type="binding site" evidence="1">
    <location>
        <position position="282"/>
    </location>
    <ligand>
        <name>NADPH</name>
        <dbReference type="ChEBI" id="CHEBI:57783"/>
    </ligand>
</feature>